<keyword id="KW-0963">Cytoplasm</keyword>
<keyword id="KW-0489">Methyltransferase</keyword>
<keyword id="KW-0694">RNA-binding</keyword>
<keyword id="KW-0698">rRNA processing</keyword>
<keyword id="KW-0949">S-adenosyl-L-methionine</keyword>
<keyword id="KW-0808">Transferase</keyword>
<feature type="chain" id="PRO_1000130315" description="Ribosomal RNA small subunit methyltransferase A">
    <location>
        <begin position="1"/>
        <end position="273"/>
    </location>
</feature>
<feature type="binding site" evidence="1">
    <location>
        <position position="18"/>
    </location>
    <ligand>
        <name>S-adenosyl-L-methionine</name>
        <dbReference type="ChEBI" id="CHEBI:59789"/>
    </ligand>
</feature>
<feature type="binding site" evidence="1">
    <location>
        <position position="20"/>
    </location>
    <ligand>
        <name>S-adenosyl-L-methionine</name>
        <dbReference type="ChEBI" id="CHEBI:59789"/>
    </ligand>
</feature>
<feature type="binding site" evidence="1">
    <location>
        <position position="45"/>
    </location>
    <ligand>
        <name>S-adenosyl-L-methionine</name>
        <dbReference type="ChEBI" id="CHEBI:59789"/>
    </ligand>
</feature>
<feature type="binding site" evidence="1">
    <location>
        <position position="66"/>
    </location>
    <ligand>
        <name>S-adenosyl-L-methionine</name>
        <dbReference type="ChEBI" id="CHEBI:59789"/>
    </ligand>
</feature>
<feature type="binding site" evidence="1">
    <location>
        <position position="91"/>
    </location>
    <ligand>
        <name>S-adenosyl-L-methionine</name>
        <dbReference type="ChEBI" id="CHEBI:59789"/>
    </ligand>
</feature>
<feature type="binding site" evidence="1">
    <location>
        <position position="113"/>
    </location>
    <ligand>
        <name>S-adenosyl-L-methionine</name>
        <dbReference type="ChEBI" id="CHEBI:59789"/>
    </ligand>
</feature>
<evidence type="ECO:0000255" key="1">
    <source>
        <dbReference type="HAMAP-Rule" id="MF_00607"/>
    </source>
</evidence>
<comment type="function">
    <text evidence="1">Specifically dimethylates two adjacent adenosines (A1518 and A1519) in the loop of a conserved hairpin near the 3'-end of 16S rRNA in the 30S particle. May play a critical role in biogenesis of 30S subunits.</text>
</comment>
<comment type="catalytic activity">
    <reaction evidence="1">
        <text>adenosine(1518)/adenosine(1519) in 16S rRNA + 4 S-adenosyl-L-methionine = N(6)-dimethyladenosine(1518)/N(6)-dimethyladenosine(1519) in 16S rRNA + 4 S-adenosyl-L-homocysteine + 4 H(+)</text>
        <dbReference type="Rhea" id="RHEA:19609"/>
        <dbReference type="Rhea" id="RHEA-COMP:10232"/>
        <dbReference type="Rhea" id="RHEA-COMP:10233"/>
        <dbReference type="ChEBI" id="CHEBI:15378"/>
        <dbReference type="ChEBI" id="CHEBI:57856"/>
        <dbReference type="ChEBI" id="CHEBI:59789"/>
        <dbReference type="ChEBI" id="CHEBI:74411"/>
        <dbReference type="ChEBI" id="CHEBI:74493"/>
        <dbReference type="EC" id="2.1.1.182"/>
    </reaction>
</comment>
<comment type="subcellular location">
    <subcellularLocation>
        <location evidence="1">Cytoplasm</location>
    </subcellularLocation>
</comment>
<comment type="similarity">
    <text evidence="1">Belongs to the class I-like SAM-binding methyltransferase superfamily. rRNA adenine N(6)-methyltransferase family. RsmA subfamily.</text>
</comment>
<protein>
    <recommendedName>
        <fullName evidence="1">Ribosomal RNA small subunit methyltransferase A</fullName>
        <ecNumber evidence="1">2.1.1.182</ecNumber>
    </recommendedName>
    <alternativeName>
        <fullName evidence="1">16S rRNA (adenine(1518)-N(6)/adenine(1519)-N(6))-dimethyltransferase</fullName>
    </alternativeName>
    <alternativeName>
        <fullName evidence="1">16S rRNA dimethyladenosine transferase</fullName>
    </alternativeName>
    <alternativeName>
        <fullName evidence="1">16S rRNA dimethylase</fullName>
    </alternativeName>
    <alternativeName>
        <fullName evidence="1">S-adenosylmethionine-6-N', N'-adenosyl(rRNA) dimethyltransferase</fullName>
    </alternativeName>
</protein>
<name>RSMA_SALEP</name>
<organism>
    <name type="scientific">Salmonella enteritidis PT4 (strain P125109)</name>
    <dbReference type="NCBI Taxonomy" id="550537"/>
    <lineage>
        <taxon>Bacteria</taxon>
        <taxon>Pseudomonadati</taxon>
        <taxon>Pseudomonadota</taxon>
        <taxon>Gammaproteobacteria</taxon>
        <taxon>Enterobacterales</taxon>
        <taxon>Enterobacteriaceae</taxon>
        <taxon>Salmonella</taxon>
    </lineage>
</organism>
<reference key="1">
    <citation type="journal article" date="2008" name="Genome Res.">
        <title>Comparative genome analysis of Salmonella enteritidis PT4 and Salmonella gallinarum 287/91 provides insights into evolutionary and host adaptation pathways.</title>
        <authorList>
            <person name="Thomson N.R."/>
            <person name="Clayton D.J."/>
            <person name="Windhorst D."/>
            <person name="Vernikos G."/>
            <person name="Davidson S."/>
            <person name="Churcher C."/>
            <person name="Quail M.A."/>
            <person name="Stevens M."/>
            <person name="Jones M.A."/>
            <person name="Watson M."/>
            <person name="Barron A."/>
            <person name="Layton A."/>
            <person name="Pickard D."/>
            <person name="Kingsley R.A."/>
            <person name="Bignell A."/>
            <person name="Clark L."/>
            <person name="Harris B."/>
            <person name="Ormond D."/>
            <person name="Abdellah Z."/>
            <person name="Brooks K."/>
            <person name="Cherevach I."/>
            <person name="Chillingworth T."/>
            <person name="Woodward J."/>
            <person name="Norberczak H."/>
            <person name="Lord A."/>
            <person name="Arrowsmith C."/>
            <person name="Jagels K."/>
            <person name="Moule S."/>
            <person name="Mungall K."/>
            <person name="Saunders M."/>
            <person name="Whitehead S."/>
            <person name="Chabalgoity J.A."/>
            <person name="Maskell D."/>
            <person name="Humphreys T."/>
            <person name="Roberts M."/>
            <person name="Barrow P.A."/>
            <person name="Dougan G."/>
            <person name="Parkhill J."/>
        </authorList>
    </citation>
    <scope>NUCLEOTIDE SEQUENCE [LARGE SCALE GENOMIC DNA]</scope>
    <source>
        <strain>P125109</strain>
    </source>
</reference>
<accession>B5R1S8</accession>
<sequence>MNNRVHQGHLARKRFGQNFLNDRFVIDSIVSAINPQKGQAMVEIGPGLAALTEPVGERLDKLTVIELDRDLAARLQTHPFLGPKLTIYQQDAMTMNFGELSAQLGQPLRVFGNLPYNISTPLMFHLFSYTDAIADMHFMLQKEVVNRLVAGPNSKAYGRLSVMAQYYCQVIPVLEVPPSAFTPPPKVDSAVVRLVPHATMPYPVKDIRVLSRITTEAFNQRRKTIRNSLGNLFSVETLTEMGIDPAMRAENISVAQYCQMANYLSENAPLKES</sequence>
<dbReference type="EC" id="2.1.1.182" evidence="1"/>
<dbReference type="EMBL" id="AM933172">
    <property type="protein sequence ID" value="CAR31679.1"/>
    <property type="molecule type" value="Genomic_DNA"/>
</dbReference>
<dbReference type="RefSeq" id="WP_001065397.1">
    <property type="nucleotide sequence ID" value="NC_011294.1"/>
</dbReference>
<dbReference type="SMR" id="B5R1S8"/>
<dbReference type="KEGG" id="set:SEN0092"/>
<dbReference type="HOGENOM" id="CLU_041220_0_1_6"/>
<dbReference type="Proteomes" id="UP000000613">
    <property type="component" value="Chromosome"/>
</dbReference>
<dbReference type="GO" id="GO:0005829">
    <property type="term" value="C:cytosol"/>
    <property type="evidence" value="ECO:0007669"/>
    <property type="project" value="TreeGrafter"/>
</dbReference>
<dbReference type="GO" id="GO:0052908">
    <property type="term" value="F:16S rRNA (adenine(1518)-N(6)/adenine(1519)-N(6))-dimethyltransferase activity"/>
    <property type="evidence" value="ECO:0007669"/>
    <property type="project" value="UniProtKB-EC"/>
</dbReference>
<dbReference type="GO" id="GO:0003723">
    <property type="term" value="F:RNA binding"/>
    <property type="evidence" value="ECO:0007669"/>
    <property type="project" value="UniProtKB-KW"/>
</dbReference>
<dbReference type="FunFam" id="1.10.8.100:FF:000001">
    <property type="entry name" value="Ribosomal RNA small subunit methyltransferase A"/>
    <property type="match status" value="1"/>
</dbReference>
<dbReference type="FunFam" id="3.40.50.150:FF:000006">
    <property type="entry name" value="Ribosomal RNA small subunit methyltransferase A"/>
    <property type="match status" value="1"/>
</dbReference>
<dbReference type="Gene3D" id="1.10.8.100">
    <property type="entry name" value="Ribosomal RNA adenine dimethylase-like, domain 2"/>
    <property type="match status" value="1"/>
</dbReference>
<dbReference type="Gene3D" id="3.40.50.150">
    <property type="entry name" value="Vaccinia Virus protein VP39"/>
    <property type="match status" value="1"/>
</dbReference>
<dbReference type="HAMAP" id="MF_00607">
    <property type="entry name" value="16SrRNA_methyltr_A"/>
    <property type="match status" value="1"/>
</dbReference>
<dbReference type="InterPro" id="IPR001737">
    <property type="entry name" value="KsgA/Erm"/>
</dbReference>
<dbReference type="InterPro" id="IPR023165">
    <property type="entry name" value="rRNA_Ade_diMease-like_C"/>
</dbReference>
<dbReference type="InterPro" id="IPR020596">
    <property type="entry name" value="rRNA_Ade_Mease_Trfase_CS"/>
</dbReference>
<dbReference type="InterPro" id="IPR020598">
    <property type="entry name" value="rRNA_Ade_methylase_Trfase_N"/>
</dbReference>
<dbReference type="InterPro" id="IPR011530">
    <property type="entry name" value="rRNA_adenine_dimethylase"/>
</dbReference>
<dbReference type="InterPro" id="IPR029063">
    <property type="entry name" value="SAM-dependent_MTases_sf"/>
</dbReference>
<dbReference type="NCBIfam" id="TIGR00755">
    <property type="entry name" value="ksgA"/>
    <property type="match status" value="1"/>
</dbReference>
<dbReference type="PANTHER" id="PTHR11727">
    <property type="entry name" value="DIMETHYLADENOSINE TRANSFERASE"/>
    <property type="match status" value="1"/>
</dbReference>
<dbReference type="PANTHER" id="PTHR11727:SF7">
    <property type="entry name" value="DIMETHYLADENOSINE TRANSFERASE-RELATED"/>
    <property type="match status" value="1"/>
</dbReference>
<dbReference type="Pfam" id="PF00398">
    <property type="entry name" value="RrnaAD"/>
    <property type="match status" value="1"/>
</dbReference>
<dbReference type="SMART" id="SM00650">
    <property type="entry name" value="rADc"/>
    <property type="match status" value="1"/>
</dbReference>
<dbReference type="SUPFAM" id="SSF53335">
    <property type="entry name" value="S-adenosyl-L-methionine-dependent methyltransferases"/>
    <property type="match status" value="1"/>
</dbReference>
<dbReference type="PROSITE" id="PS01131">
    <property type="entry name" value="RRNA_A_DIMETH"/>
    <property type="match status" value="1"/>
</dbReference>
<dbReference type="PROSITE" id="PS51689">
    <property type="entry name" value="SAM_RNA_A_N6_MT"/>
    <property type="match status" value="1"/>
</dbReference>
<proteinExistence type="inferred from homology"/>
<gene>
    <name evidence="1" type="primary">rsmA</name>
    <name evidence="1" type="synonym">ksgA</name>
    <name type="ordered locus">SEN0092</name>
</gene>